<sequence length="422" mass="47462">MVNCTSDYCVKDISLAPEGMKKIDWVSRFMPVLQHIRREFEEKKPFKGVRIAATLHLEMKTAFLLLTLKAGGAKVSAAASNPLSTQDDVVAALAKEGVKVYAIRGESKEEYYEFMNKALDIRPNIIIDDGADMVSLVHTERKELLDEIWGASEETTTGVIRLRAMERDKVLRFPVIAVNDSYMKYLFDNRYGTGQSTWDGIMRATNLLVAGKNVVVVGYGWCGRGIAMRARGLGATVIVVEVDPIKALEARMDGFLVMSMKEAAKIGDIFVTATGNIKCIRREHFELMKDGAIMANAGHFDVEIWKPDLEELAVEISNPRPNVTEYKLKDGRRLYLLADGRLVNLVAADGHPAEIMDMSFALQAKAAEYIKENHERLEPRVYVLPREIDEMVARIKLQSMGINIEELTEEQKKYLESWQHGT</sequence>
<protein>
    <recommendedName>
        <fullName evidence="1">Adenosylhomocysteinase</fullName>
        <ecNumber evidence="1">3.13.2.1</ecNumber>
    </recommendedName>
    <alternativeName>
        <fullName evidence="1">S-adenosyl-L-homocysteine hydrolase</fullName>
        <shortName evidence="1">AdoHcyase</shortName>
    </alternativeName>
</protein>
<name>SAHH_PYRAB</name>
<reference key="1">
    <citation type="journal article" date="2003" name="Mol. Microbiol.">
        <title>An integrated analysis of the genome of the hyperthermophilic archaeon Pyrococcus abyssi.</title>
        <authorList>
            <person name="Cohen G.N."/>
            <person name="Barbe V."/>
            <person name="Flament D."/>
            <person name="Galperin M."/>
            <person name="Heilig R."/>
            <person name="Lecompte O."/>
            <person name="Poch O."/>
            <person name="Prieur D."/>
            <person name="Querellou J."/>
            <person name="Ripp R."/>
            <person name="Thierry J.-C."/>
            <person name="Van der Oost J."/>
            <person name="Weissenbach J."/>
            <person name="Zivanovic Y."/>
            <person name="Forterre P."/>
        </authorList>
    </citation>
    <scope>NUCLEOTIDE SEQUENCE [LARGE SCALE GENOMIC DNA]</scope>
    <source>
        <strain>GE5 / Orsay</strain>
    </source>
</reference>
<reference key="2">
    <citation type="journal article" date="2012" name="Curr. Microbiol.">
        <title>Re-annotation of two hyperthermophilic archaea Pyrococcus abyssi GE5 and Pyrococcus furiosus DSM 3638.</title>
        <authorList>
            <person name="Gao J."/>
            <person name="Wang J."/>
        </authorList>
    </citation>
    <scope>GENOME REANNOTATION</scope>
    <source>
        <strain>GE5 / Orsay</strain>
    </source>
</reference>
<accession>Q9UYK5</accession>
<accession>G8ZIS2</accession>
<feature type="chain" id="PRO_0000117009" description="Adenosylhomocysteinase">
    <location>
        <begin position="1"/>
        <end position="422"/>
    </location>
</feature>
<feature type="binding site" evidence="1">
    <location>
        <position position="129"/>
    </location>
    <ligand>
        <name>substrate</name>
    </ligand>
</feature>
<feature type="binding site" evidence="1">
    <location>
        <position position="154"/>
    </location>
    <ligand>
        <name>substrate</name>
    </ligand>
</feature>
<feature type="binding site" evidence="1">
    <location>
        <begin position="155"/>
        <end position="157"/>
    </location>
    <ligand>
        <name>NAD(+)</name>
        <dbReference type="ChEBI" id="CHEBI:57540"/>
    </ligand>
</feature>
<feature type="binding site" evidence="1">
    <location>
        <position position="184"/>
    </location>
    <ligand>
        <name>substrate</name>
    </ligand>
</feature>
<feature type="binding site" evidence="1">
    <location>
        <position position="188"/>
    </location>
    <ligand>
        <name>substrate</name>
    </ligand>
</feature>
<feature type="binding site" evidence="1">
    <location>
        <position position="189"/>
    </location>
    <ligand>
        <name>NAD(+)</name>
        <dbReference type="ChEBI" id="CHEBI:57540"/>
    </ligand>
</feature>
<feature type="binding site" evidence="1">
    <location>
        <begin position="218"/>
        <end position="223"/>
    </location>
    <ligand>
        <name>NAD(+)</name>
        <dbReference type="ChEBI" id="CHEBI:57540"/>
    </ligand>
</feature>
<feature type="binding site" evidence="1">
    <location>
        <position position="241"/>
    </location>
    <ligand>
        <name>NAD(+)</name>
        <dbReference type="ChEBI" id="CHEBI:57540"/>
    </ligand>
</feature>
<feature type="binding site" evidence="1">
    <location>
        <position position="276"/>
    </location>
    <ligand>
        <name>NAD(+)</name>
        <dbReference type="ChEBI" id="CHEBI:57540"/>
    </ligand>
</feature>
<feature type="binding site" evidence="1">
    <location>
        <begin position="297"/>
        <end position="299"/>
    </location>
    <ligand>
        <name>NAD(+)</name>
        <dbReference type="ChEBI" id="CHEBI:57540"/>
    </ligand>
</feature>
<feature type="binding site" evidence="1">
    <location>
        <position position="344"/>
    </location>
    <ligand>
        <name>NAD(+)</name>
        <dbReference type="ChEBI" id="CHEBI:57540"/>
    </ligand>
</feature>
<keyword id="KW-0963">Cytoplasm</keyword>
<keyword id="KW-0378">Hydrolase</keyword>
<keyword id="KW-0520">NAD</keyword>
<keyword id="KW-0554">One-carbon metabolism</keyword>
<dbReference type="EC" id="3.13.2.1" evidence="1"/>
<dbReference type="EMBL" id="AJ248287">
    <property type="protein sequence ID" value="CAB50407.1"/>
    <property type="molecule type" value="Genomic_DNA"/>
</dbReference>
<dbReference type="EMBL" id="HE613800">
    <property type="protein sequence ID" value="CCE70955.1"/>
    <property type="molecule type" value="Genomic_DNA"/>
</dbReference>
<dbReference type="PIR" id="B75064">
    <property type="entry name" value="B75064"/>
</dbReference>
<dbReference type="SMR" id="Q9UYK5"/>
<dbReference type="STRING" id="272844.PAB1372"/>
<dbReference type="KEGG" id="pab:PAB1372"/>
<dbReference type="PATRIC" id="fig|272844.11.peg.1600"/>
<dbReference type="eggNOG" id="arCOG04137">
    <property type="taxonomic scope" value="Archaea"/>
</dbReference>
<dbReference type="HOGENOM" id="CLU_025194_2_1_2"/>
<dbReference type="PhylomeDB" id="Q9UYK5"/>
<dbReference type="UniPathway" id="UPA00314">
    <property type="reaction ID" value="UER00076"/>
</dbReference>
<dbReference type="Proteomes" id="UP000000810">
    <property type="component" value="Chromosome"/>
</dbReference>
<dbReference type="Proteomes" id="UP000009139">
    <property type="component" value="Chromosome"/>
</dbReference>
<dbReference type="GO" id="GO:0005829">
    <property type="term" value="C:cytosol"/>
    <property type="evidence" value="ECO:0007669"/>
    <property type="project" value="TreeGrafter"/>
</dbReference>
<dbReference type="GO" id="GO:0004013">
    <property type="term" value="F:adenosylhomocysteinase activity"/>
    <property type="evidence" value="ECO:0007669"/>
    <property type="project" value="UniProtKB-UniRule"/>
</dbReference>
<dbReference type="GO" id="GO:0071269">
    <property type="term" value="P:L-homocysteine biosynthetic process"/>
    <property type="evidence" value="ECO:0007669"/>
    <property type="project" value="UniProtKB-UniRule"/>
</dbReference>
<dbReference type="GO" id="GO:0006730">
    <property type="term" value="P:one-carbon metabolic process"/>
    <property type="evidence" value="ECO:0007669"/>
    <property type="project" value="UniProtKB-KW"/>
</dbReference>
<dbReference type="GO" id="GO:0033353">
    <property type="term" value="P:S-adenosylmethionine cycle"/>
    <property type="evidence" value="ECO:0007669"/>
    <property type="project" value="TreeGrafter"/>
</dbReference>
<dbReference type="CDD" id="cd00401">
    <property type="entry name" value="SAHH"/>
    <property type="match status" value="1"/>
</dbReference>
<dbReference type="FunFam" id="3.40.50.720:FF:000004">
    <property type="entry name" value="Adenosylhomocysteinase"/>
    <property type="match status" value="1"/>
</dbReference>
<dbReference type="Gene3D" id="3.40.50.1480">
    <property type="entry name" value="Adenosylhomocysteinase-like"/>
    <property type="match status" value="1"/>
</dbReference>
<dbReference type="Gene3D" id="3.40.50.720">
    <property type="entry name" value="NAD(P)-binding Rossmann-like Domain"/>
    <property type="match status" value="1"/>
</dbReference>
<dbReference type="HAMAP" id="MF_00563">
    <property type="entry name" value="AdoHcyase"/>
    <property type="match status" value="1"/>
</dbReference>
<dbReference type="InterPro" id="IPR042172">
    <property type="entry name" value="Adenosylhomocyst_ase-like_sf"/>
</dbReference>
<dbReference type="InterPro" id="IPR000043">
    <property type="entry name" value="Adenosylhomocysteinase-like"/>
</dbReference>
<dbReference type="InterPro" id="IPR015878">
    <property type="entry name" value="Ado_hCys_hydrolase_NAD-bd"/>
</dbReference>
<dbReference type="InterPro" id="IPR036291">
    <property type="entry name" value="NAD(P)-bd_dom_sf"/>
</dbReference>
<dbReference type="InterPro" id="IPR020082">
    <property type="entry name" value="S-Ado-L-homoCys_hydrolase_CS"/>
</dbReference>
<dbReference type="NCBIfam" id="TIGR00936">
    <property type="entry name" value="ahcY"/>
    <property type="match status" value="1"/>
</dbReference>
<dbReference type="NCBIfam" id="NF004005">
    <property type="entry name" value="PRK05476.2-3"/>
    <property type="match status" value="1"/>
</dbReference>
<dbReference type="PANTHER" id="PTHR23420">
    <property type="entry name" value="ADENOSYLHOMOCYSTEINASE"/>
    <property type="match status" value="1"/>
</dbReference>
<dbReference type="PANTHER" id="PTHR23420:SF0">
    <property type="entry name" value="ADENOSYLHOMOCYSTEINASE"/>
    <property type="match status" value="1"/>
</dbReference>
<dbReference type="Pfam" id="PF05221">
    <property type="entry name" value="AdoHcyase"/>
    <property type="match status" value="2"/>
</dbReference>
<dbReference type="Pfam" id="PF00670">
    <property type="entry name" value="AdoHcyase_NAD"/>
    <property type="match status" value="1"/>
</dbReference>
<dbReference type="PIRSF" id="PIRSF001109">
    <property type="entry name" value="Ad_hcy_hydrolase"/>
    <property type="match status" value="1"/>
</dbReference>
<dbReference type="SMART" id="SM00996">
    <property type="entry name" value="AdoHcyase"/>
    <property type="match status" value="1"/>
</dbReference>
<dbReference type="SMART" id="SM00997">
    <property type="entry name" value="AdoHcyase_NAD"/>
    <property type="match status" value="1"/>
</dbReference>
<dbReference type="SUPFAM" id="SSF52283">
    <property type="entry name" value="Formate/glycerate dehydrogenase catalytic domain-like"/>
    <property type="match status" value="1"/>
</dbReference>
<dbReference type="SUPFAM" id="SSF51735">
    <property type="entry name" value="NAD(P)-binding Rossmann-fold domains"/>
    <property type="match status" value="1"/>
</dbReference>
<dbReference type="PROSITE" id="PS00738">
    <property type="entry name" value="ADOHCYASE_1"/>
    <property type="match status" value="1"/>
</dbReference>
<dbReference type="PROSITE" id="PS00739">
    <property type="entry name" value="ADOHCYASE_2"/>
    <property type="match status" value="1"/>
</dbReference>
<proteinExistence type="inferred from homology"/>
<gene>
    <name evidence="1" type="primary">ahcY</name>
    <name type="ordered locus">PYRAB15020</name>
    <name type="ORF">PAB1372</name>
</gene>
<organism>
    <name type="scientific">Pyrococcus abyssi (strain GE5 / Orsay)</name>
    <dbReference type="NCBI Taxonomy" id="272844"/>
    <lineage>
        <taxon>Archaea</taxon>
        <taxon>Methanobacteriati</taxon>
        <taxon>Methanobacteriota</taxon>
        <taxon>Thermococci</taxon>
        <taxon>Thermococcales</taxon>
        <taxon>Thermococcaceae</taxon>
        <taxon>Pyrococcus</taxon>
    </lineage>
</organism>
<comment type="function">
    <text evidence="1">May play a key role in the regulation of the intracellular concentration of adenosylhomocysteine.</text>
</comment>
<comment type="catalytic activity">
    <reaction evidence="1">
        <text>S-adenosyl-L-homocysteine + H2O = L-homocysteine + adenosine</text>
        <dbReference type="Rhea" id="RHEA:21708"/>
        <dbReference type="ChEBI" id="CHEBI:15377"/>
        <dbReference type="ChEBI" id="CHEBI:16335"/>
        <dbReference type="ChEBI" id="CHEBI:57856"/>
        <dbReference type="ChEBI" id="CHEBI:58199"/>
        <dbReference type="EC" id="3.13.2.1"/>
    </reaction>
</comment>
<comment type="cofactor">
    <cofactor evidence="1">
        <name>NAD(+)</name>
        <dbReference type="ChEBI" id="CHEBI:57540"/>
    </cofactor>
    <text evidence="1">Binds 1 NAD(+) per subunit.</text>
</comment>
<comment type="pathway">
    <text evidence="1">Amino-acid biosynthesis; L-homocysteine biosynthesis; L-homocysteine from S-adenosyl-L-homocysteine: step 1/1.</text>
</comment>
<comment type="subcellular location">
    <subcellularLocation>
        <location evidence="1">Cytoplasm</location>
    </subcellularLocation>
</comment>
<comment type="similarity">
    <text evidence="1">Belongs to the adenosylhomocysteinase family.</text>
</comment>
<evidence type="ECO:0000255" key="1">
    <source>
        <dbReference type="HAMAP-Rule" id="MF_00563"/>
    </source>
</evidence>